<sequence>MLSRLSLLSNSRAFQQARWRIYRLKVSPTVHASQYHILSGRKLAQSIREKANDEIQAIKLKHPNFKPTLKIIQVGARPDSSTYVRMKLKASKDSNVDCIIEKLPAEITEVELLKKISDINDDDSIHGLLIQLPLPRHLDETTITNAVDFKKDVDGFHRYNAGELAKKGGKPYFIPCTPYGCMKLLEEAHVKLDGKNAVVLGRSSIVGNPIASLLKNANATVTVCHSHTRNIAEVVSQADIVIAACGIPQYVKSDWIKEGAVVIDVGINYVPDISKKSGQKLVGDVDFDSVKEKTSYITPVPGGVGPMTVAMLVSNVLLAAKRQFVESEKLPVIKPLPLHLESPVPSDIDISRAQSPKHIKQVAEELGIHSHELELYGHYKAKISPNIFKRLESRENGKYVLVAGITPTPLGEGKSTTTMGLVQALSAHLGKPSIANVRQPSLGPTLGVKGGAAGGGYAQVIPMDEFNLHLTGDIHAISAANNLLAAAIDTRMFHEATQKNDSTFYKRLVPRKKGIRKFTPSMQRRLKRLDIEKEDPDALTPEEVKRFARLNINPDTITIRRVVDINDRMLRQITIGEAATEKGFTRTTGFDITVASELMAILALSKSLHEMKERIGRMVIGADYDNKPVTVEDIGCTGALTALLRDAIKPNLMQTLEGTPVMVHAGPFANISIGASSVIADLMALKLVGSEKNPLNDKNIHEPGYVVTEAGFDFAMGGERFFDIKCRSSGLVPDAVVLVATVRALKSHGGAPNVKPGQSLPKEYTEENIDFVAKGVSNLVKQIENIKTFGIPVVVAINRFETDSQAEIEVIKKAALNAGASHAVTSNHWMEGGKGAVELAHAVVDATKEPKNFNFLYDVNSSIEDKLTSIVQKMYGGAKIEVSPEAQKKIDTYKKQGFGNLPICIAKTQYSLSHDPSLKGVPRGFTFPIRDVRASIGAGYLYALAAEIQTIPGLSTYAGYMAVEVDDDGEIEGLF</sequence>
<gene>
    <name evidence="7" type="primary">MIS1</name>
    <name type="ordered locus">YBR084W</name>
    <name type="ORF">YBR0751</name>
</gene>
<dbReference type="EC" id="1.5.1.5" evidence="6"/>
<dbReference type="EC" id="3.5.4.9" evidence="6"/>
<dbReference type="EC" id="6.3.4.3" evidence="6"/>
<dbReference type="EMBL" id="Z35953">
    <property type="protein sequence ID" value="CAA85029.1"/>
    <property type="molecule type" value="Genomic_DNA"/>
</dbReference>
<dbReference type="EMBL" id="J03724">
    <property type="protein sequence ID" value="AAA34781.1"/>
    <property type="molecule type" value="Genomic_DNA"/>
</dbReference>
<dbReference type="EMBL" id="BK006936">
    <property type="protein sequence ID" value="DAA07203.1"/>
    <property type="molecule type" value="Genomic_DNA"/>
</dbReference>
<dbReference type="PIR" id="A28174">
    <property type="entry name" value="A28174"/>
</dbReference>
<dbReference type="RefSeq" id="NP_009640.1">
    <property type="nucleotide sequence ID" value="NM_001178432.1"/>
</dbReference>
<dbReference type="SMR" id="P09440"/>
<dbReference type="BioGRID" id="32788">
    <property type="interactions" value="353"/>
</dbReference>
<dbReference type="DIP" id="DIP-6724N"/>
<dbReference type="FunCoup" id="P09440">
    <property type="interactions" value="1265"/>
</dbReference>
<dbReference type="IntAct" id="P09440">
    <property type="interactions" value="155"/>
</dbReference>
<dbReference type="MINT" id="P09440"/>
<dbReference type="STRING" id="4932.YBR084W"/>
<dbReference type="GlyGen" id="P09440">
    <property type="glycosylation" value="1 site"/>
</dbReference>
<dbReference type="iPTMnet" id="P09440"/>
<dbReference type="PaxDb" id="4932-YBR084W"/>
<dbReference type="PeptideAtlas" id="P09440"/>
<dbReference type="EnsemblFungi" id="YBR084W_mRNA">
    <property type="protein sequence ID" value="YBR084W"/>
    <property type="gene ID" value="YBR084W"/>
</dbReference>
<dbReference type="GeneID" id="852378"/>
<dbReference type="KEGG" id="sce:YBR084W"/>
<dbReference type="AGR" id="SGD:S000000288"/>
<dbReference type="SGD" id="S000000288">
    <property type="gene designation" value="MIS1"/>
</dbReference>
<dbReference type="VEuPathDB" id="FungiDB:YBR084W"/>
<dbReference type="eggNOG" id="KOG4230">
    <property type="taxonomic scope" value="Eukaryota"/>
</dbReference>
<dbReference type="HOGENOM" id="CLU_003601_2_0_1"/>
<dbReference type="InParanoid" id="P09440"/>
<dbReference type="OMA" id="IKRVVDC"/>
<dbReference type="OrthoDB" id="5126881at2759"/>
<dbReference type="BioCyc" id="YEAST:YBR084W-MONOMER"/>
<dbReference type="BRENDA" id="3.5.4.9">
    <property type="organism ID" value="984"/>
</dbReference>
<dbReference type="BRENDA" id="6.3.4.3">
    <property type="organism ID" value="984"/>
</dbReference>
<dbReference type="Reactome" id="R-SCE-196757">
    <property type="pathway name" value="Metabolism of folate and pterines"/>
</dbReference>
<dbReference type="UniPathway" id="UPA00193"/>
<dbReference type="BioGRID-ORCS" id="852378">
    <property type="hits" value="0 hits in 10 CRISPR screens"/>
</dbReference>
<dbReference type="PRO" id="PR:P09440"/>
<dbReference type="Proteomes" id="UP000002311">
    <property type="component" value="Chromosome II"/>
</dbReference>
<dbReference type="RNAct" id="P09440">
    <property type="molecule type" value="protein"/>
</dbReference>
<dbReference type="GO" id="GO:0005829">
    <property type="term" value="C:cytosol"/>
    <property type="evidence" value="ECO:0000318"/>
    <property type="project" value="GO_Central"/>
</dbReference>
<dbReference type="GO" id="GO:0005739">
    <property type="term" value="C:mitochondrion"/>
    <property type="evidence" value="ECO:0000314"/>
    <property type="project" value="SGD"/>
</dbReference>
<dbReference type="GO" id="GO:0005524">
    <property type="term" value="F:ATP binding"/>
    <property type="evidence" value="ECO:0007669"/>
    <property type="project" value="UniProtKB-KW"/>
</dbReference>
<dbReference type="GO" id="GO:0004329">
    <property type="term" value="F:formate-tetrahydrofolate ligase activity"/>
    <property type="evidence" value="ECO:0000314"/>
    <property type="project" value="SGD"/>
</dbReference>
<dbReference type="GO" id="GO:0004477">
    <property type="term" value="F:methenyltetrahydrofolate cyclohydrolase activity"/>
    <property type="evidence" value="ECO:0000314"/>
    <property type="project" value="SGD"/>
</dbReference>
<dbReference type="GO" id="GO:0004488">
    <property type="term" value="F:methylenetetrahydrofolate dehydrogenase (NADP+) activity"/>
    <property type="evidence" value="ECO:0000314"/>
    <property type="project" value="SGD"/>
</dbReference>
<dbReference type="GO" id="GO:0046656">
    <property type="term" value="P:folic acid biosynthetic process"/>
    <property type="evidence" value="ECO:0000314"/>
    <property type="project" value="SGD"/>
</dbReference>
<dbReference type="GO" id="GO:0006139">
    <property type="term" value="P:nucleobase-containing compound metabolic process"/>
    <property type="evidence" value="ECO:0000315"/>
    <property type="project" value="SGD"/>
</dbReference>
<dbReference type="GO" id="GO:0035999">
    <property type="term" value="P:tetrahydrofolate interconversion"/>
    <property type="evidence" value="ECO:0000318"/>
    <property type="project" value="GO_Central"/>
</dbReference>
<dbReference type="CDD" id="cd00477">
    <property type="entry name" value="FTHFS"/>
    <property type="match status" value="1"/>
</dbReference>
<dbReference type="CDD" id="cd01080">
    <property type="entry name" value="NAD_bind_m-THF_DH_Cyclohyd"/>
    <property type="match status" value="1"/>
</dbReference>
<dbReference type="FunFam" id="3.40.50.720:FF:000006">
    <property type="entry name" value="Bifunctional protein FolD"/>
    <property type="match status" value="1"/>
</dbReference>
<dbReference type="FunFam" id="3.40.50.300:FF:000245">
    <property type="entry name" value="C-1-tetrahydrofolate synthase, cytoplasmic"/>
    <property type="match status" value="1"/>
</dbReference>
<dbReference type="FunFam" id="3.40.50.10860:FF:000005">
    <property type="entry name" value="C-1-tetrahydrofolate synthase, cytoplasmic, putative"/>
    <property type="match status" value="1"/>
</dbReference>
<dbReference type="FunFam" id="3.40.50.300:FF:000790">
    <property type="entry name" value="C1 tetrahydrofolate synthase"/>
    <property type="match status" value="1"/>
</dbReference>
<dbReference type="FunFam" id="3.10.410.10:FF:000001">
    <property type="entry name" value="Putative formate--tetrahydrofolate ligase"/>
    <property type="match status" value="1"/>
</dbReference>
<dbReference type="Gene3D" id="3.30.1510.10">
    <property type="entry name" value="Domain 2, N(10)-formyltetrahydrofolate synthetase"/>
    <property type="match status" value="1"/>
</dbReference>
<dbReference type="Gene3D" id="3.10.410.10">
    <property type="entry name" value="Formyltetrahydrofolate synthetase, domain 3"/>
    <property type="match status" value="1"/>
</dbReference>
<dbReference type="Gene3D" id="3.40.50.10860">
    <property type="entry name" value="Leucine Dehydrogenase, chain A, domain 1"/>
    <property type="match status" value="1"/>
</dbReference>
<dbReference type="Gene3D" id="3.40.50.720">
    <property type="entry name" value="NAD(P)-binding Rossmann-like Domain"/>
    <property type="match status" value="1"/>
</dbReference>
<dbReference type="Gene3D" id="3.40.50.300">
    <property type="entry name" value="P-loop containing nucleotide triphosphate hydrolases"/>
    <property type="match status" value="2"/>
</dbReference>
<dbReference type="HAMAP" id="MF_01543">
    <property type="entry name" value="FTHFS"/>
    <property type="match status" value="1"/>
</dbReference>
<dbReference type="HAMAP" id="MF_01576">
    <property type="entry name" value="THF_DHG_CYH"/>
    <property type="match status" value="1"/>
</dbReference>
<dbReference type="InterPro" id="IPR046346">
    <property type="entry name" value="Aminoacid_DH-like_N_sf"/>
</dbReference>
<dbReference type="InterPro" id="IPR000559">
    <property type="entry name" value="Formate_THF_ligase"/>
</dbReference>
<dbReference type="InterPro" id="IPR020628">
    <property type="entry name" value="Formate_THF_ligase_CS"/>
</dbReference>
<dbReference type="InterPro" id="IPR036291">
    <property type="entry name" value="NAD(P)-bd_dom_sf"/>
</dbReference>
<dbReference type="InterPro" id="IPR027417">
    <property type="entry name" value="P-loop_NTPase"/>
</dbReference>
<dbReference type="InterPro" id="IPR000672">
    <property type="entry name" value="THF_DH/CycHdrlase"/>
</dbReference>
<dbReference type="InterPro" id="IPR020630">
    <property type="entry name" value="THF_DH/CycHdrlase_cat_dom"/>
</dbReference>
<dbReference type="InterPro" id="IPR020867">
    <property type="entry name" value="THF_DH/CycHdrlase_CS"/>
</dbReference>
<dbReference type="InterPro" id="IPR020631">
    <property type="entry name" value="THF_DH/CycHdrlase_NAD-bd_dom"/>
</dbReference>
<dbReference type="PANTHER" id="PTHR48099">
    <property type="entry name" value="C-1-TETRAHYDROFOLATE SYNTHASE, CYTOPLASMIC-RELATED"/>
    <property type="match status" value="1"/>
</dbReference>
<dbReference type="PANTHER" id="PTHR48099:SF26">
    <property type="entry name" value="C-1-TETRAHYDROFOLATE SYNTHASE, MITOCHONDRIAL"/>
    <property type="match status" value="1"/>
</dbReference>
<dbReference type="Pfam" id="PF01268">
    <property type="entry name" value="FTHFS"/>
    <property type="match status" value="1"/>
</dbReference>
<dbReference type="Pfam" id="PF00763">
    <property type="entry name" value="THF_DHG_CYH"/>
    <property type="match status" value="1"/>
</dbReference>
<dbReference type="Pfam" id="PF02882">
    <property type="entry name" value="THF_DHG_CYH_C"/>
    <property type="match status" value="1"/>
</dbReference>
<dbReference type="PRINTS" id="PR00085">
    <property type="entry name" value="THFDHDRGNASE"/>
</dbReference>
<dbReference type="SUPFAM" id="SSF53223">
    <property type="entry name" value="Aminoacid dehydrogenase-like, N-terminal domain"/>
    <property type="match status" value="1"/>
</dbReference>
<dbReference type="SUPFAM" id="SSF51735">
    <property type="entry name" value="NAD(P)-binding Rossmann-fold domains"/>
    <property type="match status" value="1"/>
</dbReference>
<dbReference type="SUPFAM" id="SSF52540">
    <property type="entry name" value="P-loop containing nucleoside triphosphate hydrolases"/>
    <property type="match status" value="1"/>
</dbReference>
<dbReference type="PROSITE" id="PS00721">
    <property type="entry name" value="FTHFS_1"/>
    <property type="match status" value="1"/>
</dbReference>
<dbReference type="PROSITE" id="PS00722">
    <property type="entry name" value="FTHFS_2"/>
    <property type="match status" value="1"/>
</dbReference>
<dbReference type="PROSITE" id="PS00766">
    <property type="entry name" value="THF_DHG_CYH_1"/>
    <property type="match status" value="1"/>
</dbReference>
<dbReference type="PROSITE" id="PS00767">
    <property type="entry name" value="THF_DHG_CYH_2"/>
    <property type="match status" value="1"/>
</dbReference>
<evidence type="ECO:0000250" key="1">
    <source>
        <dbReference type="UniProtKB" id="P07245"/>
    </source>
</evidence>
<evidence type="ECO:0000250" key="2">
    <source>
        <dbReference type="UniProtKB" id="P11586"/>
    </source>
</evidence>
<evidence type="ECO:0000269" key="3">
    <source>
    </source>
</evidence>
<evidence type="ECO:0000269" key="4">
    <source>
    </source>
</evidence>
<evidence type="ECO:0000269" key="5">
    <source>
    </source>
</evidence>
<evidence type="ECO:0000269" key="6">
    <source>
    </source>
</evidence>
<evidence type="ECO:0000303" key="7">
    <source>
    </source>
</evidence>
<evidence type="ECO:0000305" key="8"/>
<evidence type="ECO:0000305" key="9">
    <source>
    </source>
</evidence>
<feature type="transit peptide" description="Mitochondrion" evidence="6">
    <location>
        <begin position="1"/>
        <end position="34"/>
    </location>
</feature>
<feature type="chain" id="PRO_0000034052" description="C-1-tetrahydrofolate synthase, mitochondrial">
    <location>
        <begin position="35"/>
        <end position="975"/>
    </location>
</feature>
<feature type="region of interest" description="Methylenetetrahydrofolate dehydrogenase and cyclohydrolase" evidence="1">
    <location>
        <begin position="35"/>
        <end position="343"/>
    </location>
</feature>
<feature type="region of interest" description="Formyltetrahydrofolate synthetase" evidence="1">
    <location>
        <begin position="344"/>
        <end position="975"/>
    </location>
</feature>
<feature type="binding site" evidence="2">
    <location>
        <begin position="83"/>
        <end position="87"/>
    </location>
    <ligand>
        <name>substrate</name>
    </ligand>
</feature>
<feature type="binding site" evidence="2">
    <location>
        <begin position="130"/>
        <end position="132"/>
    </location>
    <ligand>
        <name>substrate</name>
    </ligand>
</feature>
<feature type="binding site" evidence="2">
    <location>
        <begin position="201"/>
        <end position="203"/>
    </location>
    <ligand>
        <name>NADP(+)</name>
        <dbReference type="ChEBI" id="CHEBI:58349"/>
    </ligand>
</feature>
<feature type="binding site" evidence="2">
    <location>
        <position position="226"/>
    </location>
    <ligand>
        <name>NADP(+)</name>
        <dbReference type="ChEBI" id="CHEBI:58349"/>
    </ligand>
</feature>
<feature type="binding site" evidence="2">
    <location>
        <begin position="301"/>
        <end position="305"/>
    </location>
    <ligand>
        <name>substrate</name>
    </ligand>
</feature>
<feature type="binding site">
    <location>
        <begin position="408"/>
        <end position="415"/>
    </location>
    <ligand>
        <name>ATP</name>
        <dbReference type="ChEBI" id="CHEBI:30616"/>
    </ligand>
</feature>
<organism>
    <name type="scientific">Saccharomyces cerevisiae (strain ATCC 204508 / S288c)</name>
    <name type="common">Baker's yeast</name>
    <dbReference type="NCBI Taxonomy" id="559292"/>
    <lineage>
        <taxon>Eukaryota</taxon>
        <taxon>Fungi</taxon>
        <taxon>Dikarya</taxon>
        <taxon>Ascomycota</taxon>
        <taxon>Saccharomycotina</taxon>
        <taxon>Saccharomycetes</taxon>
        <taxon>Saccharomycetales</taxon>
        <taxon>Saccharomycetaceae</taxon>
        <taxon>Saccharomyces</taxon>
    </lineage>
</organism>
<name>C1TM_YEAST</name>
<protein>
    <recommendedName>
        <fullName evidence="8">C-1-tetrahydrofolate synthase, mitochondrial</fullName>
        <shortName>C1-THF synthase</shortName>
    </recommendedName>
    <domain>
        <recommendedName>
            <fullName>Methylenetetrahydrofolate dehydrogenase</fullName>
            <ecNumber evidence="6">1.5.1.5</ecNumber>
        </recommendedName>
    </domain>
    <domain>
        <recommendedName>
            <fullName>Methenyltetrahydrofolate cyclohydrolase</fullName>
            <ecNumber evidence="6">3.5.4.9</ecNumber>
        </recommendedName>
    </domain>
    <domain>
        <recommendedName>
            <fullName>Formyltetrahydrofolate synthetase</fullName>
            <ecNumber evidence="6">6.3.4.3</ecNumber>
        </recommendedName>
    </domain>
</protein>
<comment type="function">
    <text evidence="6">Mitochondrial isozyme of C-1-tetrahydrofolate synthase. The trifunctional enzyme catalyzes the interconversion of the one-carbon derivatives of tetrahydrofolate (THF) between different oxidation states by the enzymatic activities 10-formyltetrahydrofolate synthetase, 5,lO-methenyltetrahydrofolate cyclohydrolase, and 5,lO-methylenetetrahydrofolate dehydrogenase.</text>
</comment>
<comment type="catalytic activity">
    <reaction evidence="6">
        <text>(6R)-5,10-methylene-5,6,7,8-tetrahydrofolate + NADP(+) = (6R)-5,10-methenyltetrahydrofolate + NADPH</text>
        <dbReference type="Rhea" id="RHEA:22812"/>
        <dbReference type="ChEBI" id="CHEBI:15636"/>
        <dbReference type="ChEBI" id="CHEBI:57455"/>
        <dbReference type="ChEBI" id="CHEBI:57783"/>
        <dbReference type="ChEBI" id="CHEBI:58349"/>
        <dbReference type="EC" id="1.5.1.5"/>
    </reaction>
    <physiologicalReaction direction="left-to-right" evidence="9">
        <dbReference type="Rhea" id="RHEA:22813"/>
    </physiologicalReaction>
    <physiologicalReaction direction="right-to-left" evidence="9">
        <dbReference type="Rhea" id="RHEA:22814"/>
    </physiologicalReaction>
</comment>
<comment type="catalytic activity">
    <reaction evidence="6">
        <text>(6R)-5,10-methenyltetrahydrofolate + H2O = (6R)-10-formyltetrahydrofolate + H(+)</text>
        <dbReference type="Rhea" id="RHEA:23700"/>
        <dbReference type="ChEBI" id="CHEBI:15377"/>
        <dbReference type="ChEBI" id="CHEBI:15378"/>
        <dbReference type="ChEBI" id="CHEBI:57455"/>
        <dbReference type="ChEBI" id="CHEBI:195366"/>
        <dbReference type="EC" id="3.5.4.9"/>
    </reaction>
    <physiologicalReaction direction="left-to-right" evidence="9">
        <dbReference type="Rhea" id="RHEA:23701"/>
    </physiologicalReaction>
    <physiologicalReaction direction="right-to-left" evidence="9">
        <dbReference type="Rhea" id="RHEA:23702"/>
    </physiologicalReaction>
</comment>
<comment type="catalytic activity">
    <reaction evidence="6">
        <text>(6S)-5,6,7,8-tetrahydrofolate + formate + ATP = (6R)-10-formyltetrahydrofolate + ADP + phosphate</text>
        <dbReference type="Rhea" id="RHEA:20221"/>
        <dbReference type="ChEBI" id="CHEBI:15740"/>
        <dbReference type="ChEBI" id="CHEBI:30616"/>
        <dbReference type="ChEBI" id="CHEBI:43474"/>
        <dbReference type="ChEBI" id="CHEBI:57453"/>
        <dbReference type="ChEBI" id="CHEBI:195366"/>
        <dbReference type="ChEBI" id="CHEBI:456216"/>
        <dbReference type="EC" id="6.3.4.3"/>
    </reaction>
    <physiologicalReaction direction="left-to-right" evidence="9">
        <dbReference type="Rhea" id="RHEA:20222"/>
    </physiologicalReaction>
    <physiologicalReaction direction="right-to-left" evidence="9">
        <dbReference type="Rhea" id="RHEA:20223"/>
    </physiologicalReaction>
</comment>
<comment type="pathway">
    <text evidence="9">One-carbon metabolism; tetrahydrofolate interconversion.</text>
</comment>
<comment type="subunit">
    <text evidence="6">Homodimer.</text>
</comment>
<comment type="subcellular location">
    <subcellularLocation>
        <location evidence="3 5 6">Mitochondrion</location>
    </subcellularLocation>
</comment>
<comment type="domain">
    <text evidence="1">This trifunctional enzyme consists of two major domains: an N-terminal part containing the methylene-THF dehydrogenase and cyclohydrolase activities and a larger C-terminal part containing formyl-THF synthetase activity.</text>
</comment>
<comment type="miscellaneous">
    <text evidence="4">Present with 11400 molecules/cell in log phase SD medium.</text>
</comment>
<comment type="similarity">
    <text evidence="8">In the N-terminal section; belongs to the tetrahydrofolate dehydrogenase/cyclohydrolase family.</text>
</comment>
<comment type="similarity">
    <text evidence="8">In the C-terminal section; belongs to the formate--tetrahydrofolate ligase family.</text>
</comment>
<reference key="1">
    <citation type="journal article" date="1988" name="J. Biol. Chem.">
        <title>Isolation and characterization of the Saccharomyces cerevisiae MIS1 gene encoding mitochondrial C1-tetrahydrofolate synthase.</title>
        <authorList>
            <person name="Shannon K.W."/>
            <person name="Rabinowitz J.C."/>
        </authorList>
    </citation>
    <scope>NUCLEOTIDE SEQUENCE [GENOMIC DNA]</scope>
</reference>
<reference key="2">
    <citation type="journal article" date="1994" name="EMBO J.">
        <title>Complete DNA sequence of yeast chromosome II.</title>
        <authorList>
            <person name="Feldmann H."/>
            <person name="Aigle M."/>
            <person name="Aljinovic G."/>
            <person name="Andre B."/>
            <person name="Baclet M.C."/>
            <person name="Barthe C."/>
            <person name="Baur A."/>
            <person name="Becam A.-M."/>
            <person name="Biteau N."/>
            <person name="Boles E."/>
            <person name="Brandt T."/>
            <person name="Brendel M."/>
            <person name="Brueckner M."/>
            <person name="Bussereau F."/>
            <person name="Christiansen C."/>
            <person name="Contreras R."/>
            <person name="Crouzet M."/>
            <person name="Cziepluch C."/>
            <person name="Demolis N."/>
            <person name="Delaveau T."/>
            <person name="Doignon F."/>
            <person name="Domdey H."/>
            <person name="Duesterhus S."/>
            <person name="Dubois E."/>
            <person name="Dujon B."/>
            <person name="El Bakkoury M."/>
            <person name="Entian K.-D."/>
            <person name="Feuermann M."/>
            <person name="Fiers W."/>
            <person name="Fobo G.M."/>
            <person name="Fritz C."/>
            <person name="Gassenhuber J."/>
            <person name="Glansdorff N."/>
            <person name="Goffeau A."/>
            <person name="Grivell L.A."/>
            <person name="de Haan M."/>
            <person name="Hein C."/>
            <person name="Herbert C.J."/>
            <person name="Hollenberg C.P."/>
            <person name="Holmstroem K."/>
            <person name="Jacq C."/>
            <person name="Jacquet M."/>
            <person name="Jauniaux J.-C."/>
            <person name="Jonniaux J.-L."/>
            <person name="Kallesoee T."/>
            <person name="Kiesau P."/>
            <person name="Kirchrath L."/>
            <person name="Koetter P."/>
            <person name="Korol S."/>
            <person name="Liebl S."/>
            <person name="Logghe M."/>
            <person name="Lohan A.J.E."/>
            <person name="Louis E.J."/>
            <person name="Li Z.Y."/>
            <person name="Maat M.J."/>
            <person name="Mallet L."/>
            <person name="Mannhaupt G."/>
            <person name="Messenguy F."/>
            <person name="Miosga T."/>
            <person name="Molemans F."/>
            <person name="Mueller S."/>
            <person name="Nasr F."/>
            <person name="Obermaier B."/>
            <person name="Perea J."/>
            <person name="Pierard A."/>
            <person name="Piravandi E."/>
            <person name="Pohl F.M."/>
            <person name="Pohl T.M."/>
            <person name="Potier S."/>
            <person name="Proft M."/>
            <person name="Purnelle B."/>
            <person name="Ramezani Rad M."/>
            <person name="Rieger M."/>
            <person name="Rose M."/>
            <person name="Schaaff-Gerstenschlaeger I."/>
            <person name="Scherens B."/>
            <person name="Schwarzlose C."/>
            <person name="Skala J."/>
            <person name="Slonimski P.P."/>
            <person name="Smits P.H.M."/>
            <person name="Souciet J.-L."/>
            <person name="Steensma H.Y."/>
            <person name="Stucka R."/>
            <person name="Urrestarazu L.A."/>
            <person name="van der Aart Q.J.M."/>
            <person name="Van Dyck L."/>
            <person name="Vassarotti A."/>
            <person name="Vetter I."/>
            <person name="Vierendeels F."/>
            <person name="Vissers S."/>
            <person name="Wagner G."/>
            <person name="de Wergifosse P."/>
            <person name="Wolfe K.H."/>
            <person name="Zagulski M."/>
            <person name="Zimmermann F.K."/>
            <person name="Mewes H.-W."/>
            <person name="Kleine K."/>
        </authorList>
    </citation>
    <scope>NUCLEOTIDE SEQUENCE [LARGE SCALE GENOMIC DNA]</scope>
    <source>
        <strain>ATCC 204508 / S288c</strain>
    </source>
</reference>
<reference key="3">
    <citation type="journal article" date="2014" name="G3 (Bethesda)">
        <title>The reference genome sequence of Saccharomyces cerevisiae: Then and now.</title>
        <authorList>
            <person name="Engel S.R."/>
            <person name="Dietrich F.S."/>
            <person name="Fisk D.G."/>
            <person name="Binkley G."/>
            <person name="Balakrishnan R."/>
            <person name="Costanzo M.C."/>
            <person name="Dwight S.S."/>
            <person name="Hitz B.C."/>
            <person name="Karra K."/>
            <person name="Nash R.S."/>
            <person name="Weng S."/>
            <person name="Wong E.D."/>
            <person name="Lloyd P."/>
            <person name="Skrzypek M.S."/>
            <person name="Miyasato S.R."/>
            <person name="Simison M."/>
            <person name="Cherry J.M."/>
        </authorList>
    </citation>
    <scope>GENOME REANNOTATION</scope>
    <source>
        <strain>ATCC 204508 / S288c</strain>
    </source>
</reference>
<reference key="4">
    <citation type="journal article" date="1986" name="J. Biol. Chem.">
        <title>Purification and characterization of a mitochondrial isozyme of C1-tetrahydrofolate synthase from Saccharomyces cerevisiae.</title>
        <authorList>
            <person name="Shannon K.W."/>
            <person name="Rabinowitz J.C."/>
        </authorList>
    </citation>
    <scope>PROTEIN SEQUENCE OF 35-74</scope>
    <scope>CATALYTIC ACTIVITY</scope>
    <scope>SUBCELLULAR LOCATION</scope>
    <scope>SUBUNIT</scope>
    <scope>PATHWAY</scope>
</reference>
<reference key="5">
    <citation type="journal article" date="2003" name="Nature">
        <title>Global analysis of protein localization in budding yeast.</title>
        <authorList>
            <person name="Huh W.-K."/>
            <person name="Falvo J.V."/>
            <person name="Gerke L.C."/>
            <person name="Carroll A.S."/>
            <person name="Howson R.W."/>
            <person name="Weissman J.S."/>
            <person name="O'Shea E.K."/>
        </authorList>
    </citation>
    <scope>SUBCELLULAR LOCATION [LARGE SCALE ANALYSIS]</scope>
</reference>
<reference key="6">
    <citation type="journal article" date="2003" name="Nature">
        <title>Global analysis of protein expression in yeast.</title>
        <authorList>
            <person name="Ghaemmaghami S."/>
            <person name="Huh W.-K."/>
            <person name="Bower K."/>
            <person name="Howson R.W."/>
            <person name="Belle A."/>
            <person name="Dephoure N."/>
            <person name="O'Shea E.K."/>
            <person name="Weissman J.S."/>
        </authorList>
    </citation>
    <scope>LEVEL OF PROTEIN EXPRESSION [LARGE SCALE ANALYSIS]</scope>
</reference>
<reference key="7">
    <citation type="journal article" date="2003" name="Proc. Natl. Acad. Sci. U.S.A.">
        <title>The proteome of Saccharomyces cerevisiae mitochondria.</title>
        <authorList>
            <person name="Sickmann A."/>
            <person name="Reinders J."/>
            <person name="Wagner Y."/>
            <person name="Joppich C."/>
            <person name="Zahedi R.P."/>
            <person name="Meyer H.E."/>
            <person name="Schoenfisch B."/>
            <person name="Perschil I."/>
            <person name="Chacinska A."/>
            <person name="Guiard B."/>
            <person name="Rehling P."/>
            <person name="Pfanner N."/>
            <person name="Meisinger C."/>
        </authorList>
    </citation>
    <scope>SUBCELLULAR LOCATION [LARGE SCALE ANALYSIS]</scope>
    <source>
        <strain>ATCC 76625 / YPH499</strain>
    </source>
</reference>
<keyword id="KW-0067">ATP-binding</keyword>
<keyword id="KW-0903">Direct protein sequencing</keyword>
<keyword id="KW-0378">Hydrolase</keyword>
<keyword id="KW-0436">Ligase</keyword>
<keyword id="KW-0496">Mitochondrion</keyword>
<keyword id="KW-0511">Multifunctional enzyme</keyword>
<keyword id="KW-0521">NADP</keyword>
<keyword id="KW-0547">Nucleotide-binding</keyword>
<keyword id="KW-0554">One-carbon metabolism</keyword>
<keyword id="KW-0560">Oxidoreductase</keyword>
<keyword id="KW-1185">Reference proteome</keyword>
<keyword id="KW-0809">Transit peptide</keyword>
<proteinExistence type="evidence at protein level"/>
<accession>P09440</accession>
<accession>D6VQ83</accession>